<keyword id="KW-0143">Chaperone</keyword>
<keyword id="KW-0963">Cytoplasm</keyword>
<keyword id="KW-0690">Ribosome biogenesis</keyword>
<keyword id="KW-0698">rRNA processing</keyword>
<name>RIMM_MARN8</name>
<gene>
    <name evidence="1" type="primary">rimM</name>
    <name type="ordered locus">Maqu_2279</name>
</gene>
<proteinExistence type="inferred from homology"/>
<feature type="chain" id="PRO_0000321738" description="Ribosome maturation factor RimM">
    <location>
        <begin position="1"/>
        <end position="175"/>
    </location>
</feature>
<feature type="domain" description="PRC barrel" evidence="1">
    <location>
        <begin position="97"/>
        <end position="175"/>
    </location>
</feature>
<reference key="1">
    <citation type="journal article" date="2011" name="Appl. Environ. Microbiol.">
        <title>Genomic potential of Marinobacter aquaeolei, a biogeochemical 'opportunitroph'.</title>
        <authorList>
            <person name="Singer E."/>
            <person name="Webb E.A."/>
            <person name="Nelson W.C."/>
            <person name="Heidelberg J.F."/>
            <person name="Ivanova N."/>
            <person name="Pati A."/>
            <person name="Edwards K.J."/>
        </authorList>
    </citation>
    <scope>NUCLEOTIDE SEQUENCE [LARGE SCALE GENOMIC DNA]</scope>
    <source>
        <strain>ATCC 700491 / DSM 11845 / VT8</strain>
    </source>
</reference>
<organism>
    <name type="scientific">Marinobacter nauticus (strain ATCC 700491 / DSM 11845 / VT8)</name>
    <name type="common">Marinobacter aquaeolei</name>
    <dbReference type="NCBI Taxonomy" id="351348"/>
    <lineage>
        <taxon>Bacteria</taxon>
        <taxon>Pseudomonadati</taxon>
        <taxon>Pseudomonadota</taxon>
        <taxon>Gammaproteobacteria</taxon>
        <taxon>Pseudomonadales</taxon>
        <taxon>Marinobacteraceae</taxon>
        <taxon>Marinobacter</taxon>
    </lineage>
</organism>
<comment type="function">
    <text evidence="1">An accessory protein needed during the final step in the assembly of 30S ribosomal subunit, possibly for assembly of the head region. Essential for efficient processing of 16S rRNA. May be needed both before and after RbfA during the maturation of 16S rRNA. It has affinity for free ribosomal 30S subunits but not for 70S ribosomes.</text>
</comment>
<comment type="subunit">
    <text evidence="1">Binds ribosomal protein uS19.</text>
</comment>
<comment type="subcellular location">
    <subcellularLocation>
        <location evidence="1">Cytoplasm</location>
    </subcellularLocation>
</comment>
<comment type="domain">
    <text evidence="1">The PRC barrel domain binds ribosomal protein uS19.</text>
</comment>
<comment type="similarity">
    <text evidence="1">Belongs to the RimM family.</text>
</comment>
<accession>A1U2Y8</accession>
<protein>
    <recommendedName>
        <fullName evidence="1">Ribosome maturation factor RimM</fullName>
    </recommendedName>
</protein>
<dbReference type="EMBL" id="CP000514">
    <property type="protein sequence ID" value="ABM19357.1"/>
    <property type="molecule type" value="Genomic_DNA"/>
</dbReference>
<dbReference type="RefSeq" id="WP_011785744.1">
    <property type="nucleotide sequence ID" value="NC_008740.1"/>
</dbReference>
<dbReference type="SMR" id="A1U2Y8"/>
<dbReference type="STRING" id="351348.Maqu_2279"/>
<dbReference type="GeneID" id="31820435"/>
<dbReference type="KEGG" id="maq:Maqu_2279"/>
<dbReference type="eggNOG" id="COG0806">
    <property type="taxonomic scope" value="Bacteria"/>
</dbReference>
<dbReference type="HOGENOM" id="CLU_077636_1_0_6"/>
<dbReference type="OrthoDB" id="9783509at2"/>
<dbReference type="Proteomes" id="UP000000998">
    <property type="component" value="Chromosome"/>
</dbReference>
<dbReference type="GO" id="GO:0005737">
    <property type="term" value="C:cytoplasm"/>
    <property type="evidence" value="ECO:0007669"/>
    <property type="project" value="UniProtKB-SubCell"/>
</dbReference>
<dbReference type="GO" id="GO:0005840">
    <property type="term" value="C:ribosome"/>
    <property type="evidence" value="ECO:0007669"/>
    <property type="project" value="InterPro"/>
</dbReference>
<dbReference type="GO" id="GO:0043022">
    <property type="term" value="F:ribosome binding"/>
    <property type="evidence" value="ECO:0007669"/>
    <property type="project" value="InterPro"/>
</dbReference>
<dbReference type="GO" id="GO:0042274">
    <property type="term" value="P:ribosomal small subunit biogenesis"/>
    <property type="evidence" value="ECO:0007669"/>
    <property type="project" value="UniProtKB-UniRule"/>
</dbReference>
<dbReference type="GO" id="GO:0006364">
    <property type="term" value="P:rRNA processing"/>
    <property type="evidence" value="ECO:0007669"/>
    <property type="project" value="UniProtKB-UniRule"/>
</dbReference>
<dbReference type="Gene3D" id="2.30.30.240">
    <property type="entry name" value="PRC-barrel domain"/>
    <property type="match status" value="1"/>
</dbReference>
<dbReference type="Gene3D" id="2.40.30.60">
    <property type="entry name" value="RimM"/>
    <property type="match status" value="1"/>
</dbReference>
<dbReference type="HAMAP" id="MF_00014">
    <property type="entry name" value="Ribosome_mat_RimM"/>
    <property type="match status" value="1"/>
</dbReference>
<dbReference type="InterPro" id="IPR027275">
    <property type="entry name" value="PRC-brl_dom"/>
</dbReference>
<dbReference type="InterPro" id="IPR011033">
    <property type="entry name" value="PRC_barrel-like_sf"/>
</dbReference>
<dbReference type="InterPro" id="IPR011961">
    <property type="entry name" value="RimM"/>
</dbReference>
<dbReference type="InterPro" id="IPR002676">
    <property type="entry name" value="RimM_N"/>
</dbReference>
<dbReference type="InterPro" id="IPR036976">
    <property type="entry name" value="RimM_N_sf"/>
</dbReference>
<dbReference type="InterPro" id="IPR009000">
    <property type="entry name" value="Transl_B-barrel_sf"/>
</dbReference>
<dbReference type="NCBIfam" id="TIGR02273">
    <property type="entry name" value="16S_RimM"/>
    <property type="match status" value="1"/>
</dbReference>
<dbReference type="PANTHER" id="PTHR33692">
    <property type="entry name" value="RIBOSOME MATURATION FACTOR RIMM"/>
    <property type="match status" value="1"/>
</dbReference>
<dbReference type="PANTHER" id="PTHR33692:SF1">
    <property type="entry name" value="RIBOSOME MATURATION FACTOR RIMM"/>
    <property type="match status" value="1"/>
</dbReference>
<dbReference type="Pfam" id="PF05239">
    <property type="entry name" value="PRC"/>
    <property type="match status" value="1"/>
</dbReference>
<dbReference type="Pfam" id="PF01782">
    <property type="entry name" value="RimM"/>
    <property type="match status" value="1"/>
</dbReference>
<dbReference type="SUPFAM" id="SSF50346">
    <property type="entry name" value="PRC-barrel domain"/>
    <property type="match status" value="1"/>
</dbReference>
<dbReference type="SUPFAM" id="SSF50447">
    <property type="entry name" value="Translation proteins"/>
    <property type="match status" value="1"/>
</dbReference>
<evidence type="ECO:0000255" key="1">
    <source>
        <dbReference type="HAMAP-Rule" id="MF_00014"/>
    </source>
</evidence>
<sequence>MTQNSQETVIGRITSVFGVKGWLKVFSYTDPKDGILNYRDWTLLLDGKRIPIRLEEGRRQGQGIVVRLKGIDDREVARTYCGAEIRVPTEQLPELPEGEFYWHQLEGLDVFTVEGECLGKVHHLLETGSNDVLVVHATAGSIDQRERLIPYLPDQVVQQVDLKGSRMVVDWDPEF</sequence>